<comment type="function">
    <text evidence="1">Required for rescue of stalled ribosomes mediated by trans-translation. Binds to transfer-messenger RNA (tmRNA), required for stable association of tmRNA with ribosomes. tmRNA and SmpB together mimic tRNA shape, replacing the anticodon stem-loop with SmpB. tmRNA is encoded by the ssrA gene; the 2 termini fold to resemble tRNA(Ala) and it encodes a 'tag peptide', a short internal open reading frame. During trans-translation Ala-aminoacylated tmRNA acts like a tRNA, entering the A-site of stalled ribosomes, displacing the stalled mRNA. The ribosome then switches to translate the ORF on the tmRNA; the nascent peptide is terminated with the 'tag peptide' encoded by the tmRNA and targeted for degradation. The ribosome is freed to recommence translation, which seems to be the essential function of trans-translation.</text>
</comment>
<comment type="subcellular location">
    <subcellularLocation>
        <location evidence="1">Cytoplasm</location>
    </subcellularLocation>
    <text evidence="1">The tmRNA-SmpB complex associates with stalled 70S ribosomes.</text>
</comment>
<comment type="similarity">
    <text evidence="1">Belongs to the SmpB family.</text>
</comment>
<keyword id="KW-0963">Cytoplasm</keyword>
<keyword id="KW-0694">RNA-binding</keyword>
<accession>A4SPV7</accession>
<evidence type="ECO:0000255" key="1">
    <source>
        <dbReference type="HAMAP-Rule" id="MF_00023"/>
    </source>
</evidence>
<evidence type="ECO:0000256" key="2">
    <source>
        <dbReference type="SAM" id="MobiDB-lite"/>
    </source>
</evidence>
<name>SSRP_AERS4</name>
<feature type="chain" id="PRO_0000331016" description="SsrA-binding protein">
    <location>
        <begin position="1"/>
        <end position="162"/>
    </location>
</feature>
<feature type="region of interest" description="Disordered" evidence="2">
    <location>
        <begin position="137"/>
        <end position="162"/>
    </location>
</feature>
<feature type="compositionally biased region" description="Basic and acidic residues" evidence="2">
    <location>
        <begin position="137"/>
        <end position="154"/>
    </location>
</feature>
<organism>
    <name type="scientific">Aeromonas salmonicida (strain A449)</name>
    <dbReference type="NCBI Taxonomy" id="382245"/>
    <lineage>
        <taxon>Bacteria</taxon>
        <taxon>Pseudomonadati</taxon>
        <taxon>Pseudomonadota</taxon>
        <taxon>Gammaproteobacteria</taxon>
        <taxon>Aeromonadales</taxon>
        <taxon>Aeromonadaceae</taxon>
        <taxon>Aeromonas</taxon>
    </lineage>
</organism>
<proteinExistence type="inferred from homology"/>
<protein>
    <recommendedName>
        <fullName evidence="1">SsrA-binding protein</fullName>
    </recommendedName>
    <alternativeName>
        <fullName evidence="1">Small protein B</fullName>
    </alternativeName>
</protein>
<reference key="1">
    <citation type="journal article" date="2008" name="BMC Genomics">
        <title>The genome of Aeromonas salmonicida subsp. salmonicida A449: insights into the evolution of a fish pathogen.</title>
        <authorList>
            <person name="Reith M.E."/>
            <person name="Singh R.K."/>
            <person name="Curtis B."/>
            <person name="Boyd J.M."/>
            <person name="Bouevitch A."/>
            <person name="Kimball J."/>
            <person name="Munholland J."/>
            <person name="Murphy C."/>
            <person name="Sarty D."/>
            <person name="Williams J."/>
            <person name="Nash J.H."/>
            <person name="Johnson S.C."/>
            <person name="Brown L.L."/>
        </authorList>
    </citation>
    <scope>NUCLEOTIDE SEQUENCE [LARGE SCALE GENOMIC DNA]</scope>
    <source>
        <strain>A449</strain>
    </source>
</reference>
<gene>
    <name evidence="1" type="primary">smpB</name>
    <name type="ordered locus">ASA_2922</name>
</gene>
<sequence>MSKKNSKNKAGSSTIALNRTARHEYFIEERVEAGLSLQGWEVKSLRAGKANISEAYVIFMQGEAFLFGSTFLPLNAASSHVVCDPTRTRKLLLSRHELDKLESLTARQGYTIVPLALYWKECWVKVEIGLVKGKKEHDKREDTKAREWDREKARIMKNKHRG</sequence>
<dbReference type="EMBL" id="CP000644">
    <property type="protein sequence ID" value="ABO90929.1"/>
    <property type="molecule type" value="Genomic_DNA"/>
</dbReference>
<dbReference type="RefSeq" id="WP_005312834.1">
    <property type="nucleotide sequence ID" value="NC_009348.1"/>
</dbReference>
<dbReference type="SMR" id="A4SPV7"/>
<dbReference type="STRING" id="29491.GCA_000820065_01435"/>
<dbReference type="GeneID" id="79880645"/>
<dbReference type="KEGG" id="asa:ASA_2922"/>
<dbReference type="eggNOG" id="COG0691">
    <property type="taxonomic scope" value="Bacteria"/>
</dbReference>
<dbReference type="HOGENOM" id="CLU_108953_3_0_6"/>
<dbReference type="Proteomes" id="UP000000225">
    <property type="component" value="Chromosome"/>
</dbReference>
<dbReference type="GO" id="GO:0005829">
    <property type="term" value="C:cytosol"/>
    <property type="evidence" value="ECO:0007669"/>
    <property type="project" value="TreeGrafter"/>
</dbReference>
<dbReference type="GO" id="GO:0003723">
    <property type="term" value="F:RNA binding"/>
    <property type="evidence" value="ECO:0007669"/>
    <property type="project" value="UniProtKB-UniRule"/>
</dbReference>
<dbReference type="GO" id="GO:0070929">
    <property type="term" value="P:trans-translation"/>
    <property type="evidence" value="ECO:0007669"/>
    <property type="project" value="UniProtKB-UniRule"/>
</dbReference>
<dbReference type="CDD" id="cd09294">
    <property type="entry name" value="SmpB"/>
    <property type="match status" value="1"/>
</dbReference>
<dbReference type="Gene3D" id="2.40.280.10">
    <property type="match status" value="1"/>
</dbReference>
<dbReference type="HAMAP" id="MF_00023">
    <property type="entry name" value="SmpB"/>
    <property type="match status" value="1"/>
</dbReference>
<dbReference type="InterPro" id="IPR023620">
    <property type="entry name" value="SmpB"/>
</dbReference>
<dbReference type="InterPro" id="IPR000037">
    <property type="entry name" value="SsrA-bd_prot"/>
</dbReference>
<dbReference type="InterPro" id="IPR020081">
    <property type="entry name" value="SsrA-bd_prot_CS"/>
</dbReference>
<dbReference type="NCBIfam" id="NF003843">
    <property type="entry name" value="PRK05422.1"/>
    <property type="match status" value="1"/>
</dbReference>
<dbReference type="NCBIfam" id="TIGR00086">
    <property type="entry name" value="smpB"/>
    <property type="match status" value="1"/>
</dbReference>
<dbReference type="PANTHER" id="PTHR30308:SF2">
    <property type="entry name" value="SSRA-BINDING PROTEIN"/>
    <property type="match status" value="1"/>
</dbReference>
<dbReference type="PANTHER" id="PTHR30308">
    <property type="entry name" value="TMRNA-BINDING COMPONENT OF TRANS-TRANSLATION TAGGING COMPLEX"/>
    <property type="match status" value="1"/>
</dbReference>
<dbReference type="Pfam" id="PF01668">
    <property type="entry name" value="SmpB"/>
    <property type="match status" value="1"/>
</dbReference>
<dbReference type="SUPFAM" id="SSF74982">
    <property type="entry name" value="Small protein B (SmpB)"/>
    <property type="match status" value="1"/>
</dbReference>
<dbReference type="PROSITE" id="PS01317">
    <property type="entry name" value="SSRP"/>
    <property type="match status" value="1"/>
</dbReference>